<feature type="chain" id="PRO_0000168769" description="Envelope biogenesis factor ElyC">
    <location>
        <begin position="1"/>
        <end position="259"/>
    </location>
</feature>
<feature type="transmembrane region" description="Helical" evidence="2">
    <location>
        <begin position="12"/>
        <end position="32"/>
    </location>
</feature>
<feature type="transmembrane region" description="Helical" evidence="2">
    <location>
        <begin position="39"/>
        <end position="59"/>
    </location>
</feature>
<reference key="1">
    <citation type="journal article" date="2001" name="Nature">
        <title>Genome sequence of enterohaemorrhagic Escherichia coli O157:H7.</title>
        <authorList>
            <person name="Perna N.T."/>
            <person name="Plunkett G. III"/>
            <person name="Burland V."/>
            <person name="Mau B."/>
            <person name="Glasner J.D."/>
            <person name="Rose D.J."/>
            <person name="Mayhew G.F."/>
            <person name="Evans P.S."/>
            <person name="Gregor J."/>
            <person name="Kirkpatrick H.A."/>
            <person name="Posfai G."/>
            <person name="Hackett J."/>
            <person name="Klink S."/>
            <person name="Boutin A."/>
            <person name="Shao Y."/>
            <person name="Miller L."/>
            <person name="Grotbeck E.J."/>
            <person name="Davis N.W."/>
            <person name="Lim A."/>
            <person name="Dimalanta E.T."/>
            <person name="Potamousis K."/>
            <person name="Apodaca J."/>
            <person name="Anantharaman T.S."/>
            <person name="Lin J."/>
            <person name="Yen G."/>
            <person name="Schwartz D.C."/>
            <person name="Welch R.A."/>
            <person name="Blattner F.R."/>
        </authorList>
    </citation>
    <scope>NUCLEOTIDE SEQUENCE [LARGE SCALE GENOMIC DNA]</scope>
    <source>
        <strain>O157:H7 / EDL933 / ATCC 700927 / EHEC</strain>
    </source>
</reference>
<reference key="2">
    <citation type="journal article" date="2001" name="DNA Res.">
        <title>Complete genome sequence of enterohemorrhagic Escherichia coli O157:H7 and genomic comparison with a laboratory strain K-12.</title>
        <authorList>
            <person name="Hayashi T."/>
            <person name="Makino K."/>
            <person name="Ohnishi M."/>
            <person name="Kurokawa K."/>
            <person name="Ishii K."/>
            <person name="Yokoyama K."/>
            <person name="Han C.-G."/>
            <person name="Ohtsubo E."/>
            <person name="Nakayama K."/>
            <person name="Murata T."/>
            <person name="Tanaka M."/>
            <person name="Tobe T."/>
            <person name="Iida T."/>
            <person name="Takami H."/>
            <person name="Honda T."/>
            <person name="Sasakawa C."/>
            <person name="Ogasawara N."/>
            <person name="Yasunaga T."/>
            <person name="Kuhara S."/>
            <person name="Shiba T."/>
            <person name="Hattori M."/>
            <person name="Shinagawa H."/>
        </authorList>
    </citation>
    <scope>NUCLEOTIDE SEQUENCE [LARGE SCALE GENOMIC DNA]</scope>
    <source>
        <strain>O157:H7 / Sakai / RIMD 0509952 / EHEC</strain>
    </source>
</reference>
<dbReference type="EMBL" id="AE005174">
    <property type="protein sequence ID" value="AAG55405.1"/>
    <property type="molecule type" value="Genomic_DNA"/>
</dbReference>
<dbReference type="EMBL" id="BA000007">
    <property type="protein sequence ID" value="BAB34426.1"/>
    <property type="molecule type" value="Genomic_DNA"/>
</dbReference>
<dbReference type="PIR" id="A85618">
    <property type="entry name" value="A85618"/>
</dbReference>
<dbReference type="PIR" id="C90754">
    <property type="entry name" value="C90754"/>
</dbReference>
<dbReference type="RefSeq" id="NP_309030.1">
    <property type="nucleotide sequence ID" value="NC_002695.1"/>
</dbReference>
<dbReference type="RefSeq" id="WP_000899600.1">
    <property type="nucleotide sequence ID" value="NZ_VOAI01000006.1"/>
</dbReference>
<dbReference type="STRING" id="155864.Z1267"/>
<dbReference type="GeneID" id="917746"/>
<dbReference type="KEGG" id="ece:Z1267"/>
<dbReference type="KEGG" id="ecs:ECs_1003"/>
<dbReference type="PATRIC" id="fig|386585.9.peg.1123"/>
<dbReference type="eggNOG" id="COG1434">
    <property type="taxonomic scope" value="Bacteria"/>
</dbReference>
<dbReference type="HOGENOM" id="CLU_053514_0_0_6"/>
<dbReference type="OMA" id="LWFTRWQ"/>
<dbReference type="Proteomes" id="UP000000558">
    <property type="component" value="Chromosome"/>
</dbReference>
<dbReference type="Proteomes" id="UP000002519">
    <property type="component" value="Chromosome"/>
</dbReference>
<dbReference type="GO" id="GO:0005886">
    <property type="term" value="C:plasma membrane"/>
    <property type="evidence" value="ECO:0007669"/>
    <property type="project" value="UniProtKB-SubCell"/>
</dbReference>
<dbReference type="GO" id="GO:0071555">
    <property type="term" value="P:cell wall organization"/>
    <property type="evidence" value="ECO:0007669"/>
    <property type="project" value="UniProtKB-KW"/>
</dbReference>
<dbReference type="GO" id="GO:0043164">
    <property type="term" value="P:Gram-negative-bacterium-type cell wall biogenesis"/>
    <property type="evidence" value="ECO:0007669"/>
    <property type="project" value="TreeGrafter"/>
</dbReference>
<dbReference type="GO" id="GO:0000270">
    <property type="term" value="P:peptidoglycan metabolic process"/>
    <property type="evidence" value="ECO:0007669"/>
    <property type="project" value="TreeGrafter"/>
</dbReference>
<dbReference type="CDD" id="cd06259">
    <property type="entry name" value="YdcF-like"/>
    <property type="match status" value="1"/>
</dbReference>
<dbReference type="FunFam" id="3.40.50.620:FF:000164">
    <property type="entry name" value="Envelope biogenesis factor ElyC"/>
    <property type="match status" value="1"/>
</dbReference>
<dbReference type="Gene3D" id="3.40.50.620">
    <property type="entry name" value="HUPs"/>
    <property type="match status" value="1"/>
</dbReference>
<dbReference type="InterPro" id="IPR051599">
    <property type="entry name" value="Cell_Envelope_Assoc"/>
</dbReference>
<dbReference type="InterPro" id="IPR003848">
    <property type="entry name" value="DUF218"/>
</dbReference>
<dbReference type="InterPro" id="IPR014729">
    <property type="entry name" value="Rossmann-like_a/b/a_fold"/>
</dbReference>
<dbReference type="NCBIfam" id="NF007794">
    <property type="entry name" value="PRK10494.1"/>
    <property type="match status" value="1"/>
</dbReference>
<dbReference type="PANTHER" id="PTHR30336:SF4">
    <property type="entry name" value="ENVELOPE BIOGENESIS FACTOR ELYC"/>
    <property type="match status" value="1"/>
</dbReference>
<dbReference type="PANTHER" id="PTHR30336">
    <property type="entry name" value="INNER MEMBRANE PROTEIN, PROBABLE PERMEASE"/>
    <property type="match status" value="1"/>
</dbReference>
<dbReference type="Pfam" id="PF02698">
    <property type="entry name" value="DUF218"/>
    <property type="match status" value="1"/>
</dbReference>
<proteinExistence type="inferred from homology"/>
<organism>
    <name type="scientific">Escherichia coli O157:H7</name>
    <dbReference type="NCBI Taxonomy" id="83334"/>
    <lineage>
        <taxon>Bacteria</taxon>
        <taxon>Pseudomonadati</taxon>
        <taxon>Pseudomonadota</taxon>
        <taxon>Gammaproteobacteria</taxon>
        <taxon>Enterobacterales</taxon>
        <taxon>Enterobacteriaceae</taxon>
        <taxon>Escherichia</taxon>
    </lineage>
</organism>
<sequence length="259" mass="28666">MLFTLKKVIGNMLLPLPLMLLIIGAGLALLWFSRFQKTGKIFISIGWLALLLLSLQPVADRLLRPIESTYPTWNNSQKVDYIVVLGGGYTWNPQWAPSSNLINNSLPRLNEGIRLWRENPGSKLIFTGGVAKTNTVSTAEVGARVAQSLGVPREQIITLDLPKDTEEEAAAVKQAIGDAPFLLVTSASHLPRAMIFFQQEGLNPLPAPANQLAIDSPLNPWERAIPSPVWLMHSDRVGYETLGRIWQWLKGSSGEPRQE</sequence>
<evidence type="ECO:0000250" key="1"/>
<evidence type="ECO:0000255" key="2"/>
<evidence type="ECO:0000305" key="3"/>
<keyword id="KW-0997">Cell inner membrane</keyword>
<keyword id="KW-1003">Cell membrane</keyword>
<keyword id="KW-0961">Cell wall biogenesis/degradation</keyword>
<keyword id="KW-0472">Membrane</keyword>
<keyword id="KW-1185">Reference proteome</keyword>
<keyword id="KW-0812">Transmembrane</keyword>
<keyword id="KW-1133">Transmembrane helix</keyword>
<accession>P0AB02</accession>
<accession>P36565</accession>
<accession>P75846</accession>
<gene>
    <name type="primary">elyC</name>
    <name type="synonym">ycbC</name>
    <name type="ordered locus">Z1267</name>
    <name type="ordered locus">ECs1003</name>
</gene>
<comment type="function">
    <text evidence="1">Plays a critical role in the metabolism of the essential lipid carrier used for cell wall synthesis.</text>
</comment>
<comment type="subcellular location">
    <subcellularLocation>
        <location evidence="3">Cell inner membrane</location>
        <topology evidence="3">Multi-pass membrane protein</topology>
    </subcellularLocation>
</comment>
<protein>
    <recommendedName>
        <fullName>Envelope biogenesis factor ElyC</fullName>
    </recommendedName>
</protein>
<name>ELYC_ECO57</name>